<evidence type="ECO:0000255" key="1">
    <source>
        <dbReference type="HAMAP-Rule" id="MF_00046"/>
    </source>
</evidence>
<keyword id="KW-0067">ATP-binding</keyword>
<keyword id="KW-0131">Cell cycle</keyword>
<keyword id="KW-0132">Cell division</keyword>
<keyword id="KW-0133">Cell shape</keyword>
<keyword id="KW-0961">Cell wall biogenesis/degradation</keyword>
<keyword id="KW-0963">Cytoplasm</keyword>
<keyword id="KW-0436">Ligase</keyword>
<keyword id="KW-0547">Nucleotide-binding</keyword>
<keyword id="KW-0573">Peptidoglycan synthesis</keyword>
<accession>B9J189</accession>
<reference key="1">
    <citation type="journal article" date="2009" name="J. Bacteriol.">
        <title>Complete genome sequence of the extremophilic Bacillus cereus strain Q1 with industrial applications.</title>
        <authorList>
            <person name="Xiong Z."/>
            <person name="Jiang Y."/>
            <person name="Qi D."/>
            <person name="Lu H."/>
            <person name="Yang F."/>
            <person name="Yang J."/>
            <person name="Chen L."/>
            <person name="Sun L."/>
            <person name="Xu X."/>
            <person name="Xue Y."/>
            <person name="Zhu Y."/>
            <person name="Jin Q."/>
        </authorList>
    </citation>
    <scope>NUCLEOTIDE SEQUENCE [LARGE SCALE GENOMIC DNA]</scope>
    <source>
        <strain>Q1</strain>
    </source>
</reference>
<comment type="function">
    <text evidence="1">Cell wall formation.</text>
</comment>
<comment type="catalytic activity">
    <reaction evidence="1">
        <text>UDP-N-acetyl-alpha-D-muramate + L-alanine + ATP = UDP-N-acetyl-alpha-D-muramoyl-L-alanine + ADP + phosphate + H(+)</text>
        <dbReference type="Rhea" id="RHEA:23372"/>
        <dbReference type="ChEBI" id="CHEBI:15378"/>
        <dbReference type="ChEBI" id="CHEBI:30616"/>
        <dbReference type="ChEBI" id="CHEBI:43474"/>
        <dbReference type="ChEBI" id="CHEBI:57972"/>
        <dbReference type="ChEBI" id="CHEBI:70757"/>
        <dbReference type="ChEBI" id="CHEBI:83898"/>
        <dbReference type="ChEBI" id="CHEBI:456216"/>
        <dbReference type="EC" id="6.3.2.8"/>
    </reaction>
</comment>
<comment type="pathway">
    <text evidence="1">Cell wall biogenesis; peptidoglycan biosynthesis.</text>
</comment>
<comment type="subcellular location">
    <subcellularLocation>
        <location evidence="1">Cytoplasm</location>
    </subcellularLocation>
</comment>
<comment type="similarity">
    <text evidence="1">Belongs to the MurCDEF family.</text>
</comment>
<organism>
    <name type="scientific">Bacillus cereus (strain Q1)</name>
    <dbReference type="NCBI Taxonomy" id="361100"/>
    <lineage>
        <taxon>Bacteria</taxon>
        <taxon>Bacillati</taxon>
        <taxon>Bacillota</taxon>
        <taxon>Bacilli</taxon>
        <taxon>Bacillales</taxon>
        <taxon>Bacillaceae</taxon>
        <taxon>Bacillus</taxon>
        <taxon>Bacillus cereus group</taxon>
    </lineage>
</organism>
<name>MURC_BACCQ</name>
<sequence>MTVYHFVGIKGTGMSSLAQILHDMKHTVQGSDYEKRFFTQTALEKRSISILPFDKSNVKEGQVIIAGNAFPDTHEEIVAAKELNIPVHRYHHFLGDLMNQYTSVAVTGAHGKTSTTGLLAHVMQGAHPTSYLIGDGTGHGVENSKYFVFEACEYRRHFLSYNPDYAIMTNIDFDHPDYFTDINDVFSAFQEMALQVKKGIIACGDDEELQKIQAKVPVIFYGFGEDNDFQARNIQKRTDGTIFDVFVRNTYYDTFKITGYGNHSVLNALAVIALCHYENVDVEAVKHQLTTFEGVKRRFNEKPMGEQVIIDDYAHHPTEINATIEAARQKHPEREIVVVFQPHTFSRTEKFLDEFAESLSKADQVYLCDIFGSARENKGELTIEDLQKRIDGAELITDTTTDVLKKHKNGVLIFMGAGDIQKFEAAYVKEVQVAEK</sequence>
<dbReference type="EC" id="6.3.2.8" evidence="1"/>
<dbReference type="EMBL" id="CP000227">
    <property type="protein sequence ID" value="ACM14927.1"/>
    <property type="molecule type" value="Genomic_DNA"/>
</dbReference>
<dbReference type="SMR" id="B9J189"/>
<dbReference type="KEGG" id="bcq:BCQ_4501"/>
<dbReference type="HOGENOM" id="CLU_028104_1_0_9"/>
<dbReference type="UniPathway" id="UPA00219"/>
<dbReference type="Proteomes" id="UP000000441">
    <property type="component" value="Chromosome"/>
</dbReference>
<dbReference type="GO" id="GO:0005737">
    <property type="term" value="C:cytoplasm"/>
    <property type="evidence" value="ECO:0007669"/>
    <property type="project" value="UniProtKB-SubCell"/>
</dbReference>
<dbReference type="GO" id="GO:0005524">
    <property type="term" value="F:ATP binding"/>
    <property type="evidence" value="ECO:0007669"/>
    <property type="project" value="UniProtKB-UniRule"/>
</dbReference>
<dbReference type="GO" id="GO:0008763">
    <property type="term" value="F:UDP-N-acetylmuramate-L-alanine ligase activity"/>
    <property type="evidence" value="ECO:0007669"/>
    <property type="project" value="UniProtKB-UniRule"/>
</dbReference>
<dbReference type="GO" id="GO:0051301">
    <property type="term" value="P:cell division"/>
    <property type="evidence" value="ECO:0007669"/>
    <property type="project" value="UniProtKB-KW"/>
</dbReference>
<dbReference type="GO" id="GO:0071555">
    <property type="term" value="P:cell wall organization"/>
    <property type="evidence" value="ECO:0007669"/>
    <property type="project" value="UniProtKB-KW"/>
</dbReference>
<dbReference type="GO" id="GO:0009252">
    <property type="term" value="P:peptidoglycan biosynthetic process"/>
    <property type="evidence" value="ECO:0007669"/>
    <property type="project" value="UniProtKB-UniRule"/>
</dbReference>
<dbReference type="GO" id="GO:0008360">
    <property type="term" value="P:regulation of cell shape"/>
    <property type="evidence" value="ECO:0007669"/>
    <property type="project" value="UniProtKB-KW"/>
</dbReference>
<dbReference type="Gene3D" id="3.90.190.20">
    <property type="entry name" value="Mur ligase, C-terminal domain"/>
    <property type="match status" value="1"/>
</dbReference>
<dbReference type="Gene3D" id="3.40.1190.10">
    <property type="entry name" value="Mur-like, catalytic domain"/>
    <property type="match status" value="1"/>
</dbReference>
<dbReference type="Gene3D" id="3.40.50.720">
    <property type="entry name" value="NAD(P)-binding Rossmann-like Domain"/>
    <property type="match status" value="1"/>
</dbReference>
<dbReference type="HAMAP" id="MF_00046">
    <property type="entry name" value="MurC"/>
    <property type="match status" value="1"/>
</dbReference>
<dbReference type="InterPro" id="IPR036565">
    <property type="entry name" value="Mur-like_cat_sf"/>
</dbReference>
<dbReference type="InterPro" id="IPR004101">
    <property type="entry name" value="Mur_ligase_C"/>
</dbReference>
<dbReference type="InterPro" id="IPR036615">
    <property type="entry name" value="Mur_ligase_C_dom_sf"/>
</dbReference>
<dbReference type="InterPro" id="IPR013221">
    <property type="entry name" value="Mur_ligase_cen"/>
</dbReference>
<dbReference type="InterPro" id="IPR000713">
    <property type="entry name" value="Mur_ligase_N"/>
</dbReference>
<dbReference type="InterPro" id="IPR050061">
    <property type="entry name" value="MurCDEF_pg_biosynth"/>
</dbReference>
<dbReference type="InterPro" id="IPR005758">
    <property type="entry name" value="UDP-N-AcMur_Ala_ligase_MurC"/>
</dbReference>
<dbReference type="NCBIfam" id="TIGR01082">
    <property type="entry name" value="murC"/>
    <property type="match status" value="1"/>
</dbReference>
<dbReference type="PANTHER" id="PTHR43445:SF3">
    <property type="entry name" value="UDP-N-ACETYLMURAMATE--L-ALANINE LIGASE"/>
    <property type="match status" value="1"/>
</dbReference>
<dbReference type="PANTHER" id="PTHR43445">
    <property type="entry name" value="UDP-N-ACETYLMURAMATE--L-ALANINE LIGASE-RELATED"/>
    <property type="match status" value="1"/>
</dbReference>
<dbReference type="Pfam" id="PF01225">
    <property type="entry name" value="Mur_ligase"/>
    <property type="match status" value="1"/>
</dbReference>
<dbReference type="Pfam" id="PF02875">
    <property type="entry name" value="Mur_ligase_C"/>
    <property type="match status" value="1"/>
</dbReference>
<dbReference type="Pfam" id="PF08245">
    <property type="entry name" value="Mur_ligase_M"/>
    <property type="match status" value="1"/>
</dbReference>
<dbReference type="SUPFAM" id="SSF51984">
    <property type="entry name" value="MurCD N-terminal domain"/>
    <property type="match status" value="1"/>
</dbReference>
<dbReference type="SUPFAM" id="SSF53623">
    <property type="entry name" value="MurD-like peptide ligases, catalytic domain"/>
    <property type="match status" value="1"/>
</dbReference>
<dbReference type="SUPFAM" id="SSF53244">
    <property type="entry name" value="MurD-like peptide ligases, peptide-binding domain"/>
    <property type="match status" value="1"/>
</dbReference>
<proteinExistence type="inferred from homology"/>
<gene>
    <name evidence="1" type="primary">murC</name>
    <name type="ordered locus">BCQ_4501</name>
</gene>
<feature type="chain" id="PRO_1000117392" description="UDP-N-acetylmuramate--L-alanine ligase">
    <location>
        <begin position="1"/>
        <end position="436"/>
    </location>
</feature>
<feature type="binding site" evidence="1">
    <location>
        <begin position="108"/>
        <end position="114"/>
    </location>
    <ligand>
        <name>ATP</name>
        <dbReference type="ChEBI" id="CHEBI:30616"/>
    </ligand>
</feature>
<protein>
    <recommendedName>
        <fullName evidence="1">UDP-N-acetylmuramate--L-alanine ligase</fullName>
        <ecNumber evidence="1">6.3.2.8</ecNumber>
    </recommendedName>
    <alternativeName>
        <fullName evidence="1">UDP-N-acetylmuramoyl-L-alanine synthetase</fullName>
    </alternativeName>
</protein>